<dbReference type="EC" id="3.1.3.25"/>
<dbReference type="EMBL" id="AC004793">
    <property type="protein sequence ID" value="AAD21685.1"/>
    <property type="status" value="ALT_SEQ"/>
    <property type="molecule type" value="Genomic_DNA"/>
</dbReference>
<dbReference type="EMBL" id="CP002684">
    <property type="protein sequence ID" value="AEE31327.1"/>
    <property type="molecule type" value="Genomic_DNA"/>
</dbReference>
<dbReference type="EMBL" id="AY084989">
    <property type="protein sequence ID" value="AAM61548.1"/>
    <property type="molecule type" value="mRNA"/>
</dbReference>
<dbReference type="EMBL" id="AF387002">
    <property type="protein sequence ID" value="AAK62447.1"/>
    <property type="molecule type" value="mRNA"/>
</dbReference>
<dbReference type="EMBL" id="BT008458">
    <property type="protein sequence ID" value="AAP37817.1"/>
    <property type="molecule type" value="mRNA"/>
</dbReference>
<dbReference type="PIR" id="A86438">
    <property type="entry name" value="A86438"/>
</dbReference>
<dbReference type="RefSeq" id="NP_564376.1">
    <property type="nucleotide sequence ID" value="NM_102857.2"/>
</dbReference>
<dbReference type="SMR" id="Q94F00"/>
<dbReference type="BioGRID" id="25242">
    <property type="interactions" value="2"/>
</dbReference>
<dbReference type="FunCoup" id="Q94F00">
    <property type="interactions" value="919"/>
</dbReference>
<dbReference type="IntAct" id="Q94F00">
    <property type="interactions" value="1"/>
</dbReference>
<dbReference type="STRING" id="3702.Q94F00"/>
<dbReference type="iPTMnet" id="Q94F00"/>
<dbReference type="PaxDb" id="3702-AT1G31190.1"/>
<dbReference type="ProteomicsDB" id="248451"/>
<dbReference type="EnsemblPlants" id="AT1G31190.1">
    <property type="protein sequence ID" value="AT1G31190.1"/>
    <property type="gene ID" value="AT1G31190"/>
</dbReference>
<dbReference type="GeneID" id="840007"/>
<dbReference type="Gramene" id="AT1G31190.1">
    <property type="protein sequence ID" value="AT1G31190.1"/>
    <property type="gene ID" value="AT1G31190"/>
</dbReference>
<dbReference type="KEGG" id="ath:AT1G31190"/>
<dbReference type="Araport" id="AT1G31190"/>
<dbReference type="TAIR" id="AT1G31190">
    <property type="gene designation" value="IMPL1"/>
</dbReference>
<dbReference type="eggNOG" id="KOG2951">
    <property type="taxonomic scope" value="Eukaryota"/>
</dbReference>
<dbReference type="HOGENOM" id="CLU_044118_0_2_1"/>
<dbReference type="InParanoid" id="Q94F00"/>
<dbReference type="OMA" id="YQTEIDV"/>
<dbReference type="BioCyc" id="ARA:AT1G31190-MONOMER"/>
<dbReference type="BioCyc" id="MetaCyc:AT1G31190-MONOMER"/>
<dbReference type="BRENDA" id="3.1.3.25">
    <property type="organism ID" value="399"/>
</dbReference>
<dbReference type="UniPathway" id="UPA00823">
    <property type="reaction ID" value="UER00788"/>
</dbReference>
<dbReference type="PRO" id="PR:Q94F00"/>
<dbReference type="Proteomes" id="UP000006548">
    <property type="component" value="Chromosome 1"/>
</dbReference>
<dbReference type="ExpressionAtlas" id="Q94F00">
    <property type="expression patterns" value="baseline and differential"/>
</dbReference>
<dbReference type="GO" id="GO:0009507">
    <property type="term" value="C:chloroplast"/>
    <property type="evidence" value="ECO:0007005"/>
    <property type="project" value="TAIR"/>
</dbReference>
<dbReference type="GO" id="GO:0009570">
    <property type="term" value="C:chloroplast stroma"/>
    <property type="evidence" value="ECO:0007005"/>
    <property type="project" value="TAIR"/>
</dbReference>
<dbReference type="GO" id="GO:0008934">
    <property type="term" value="F:inositol monophosphate 1-phosphatase activity"/>
    <property type="evidence" value="ECO:0000314"/>
    <property type="project" value="TAIR"/>
</dbReference>
<dbReference type="GO" id="GO:0046872">
    <property type="term" value="F:metal ion binding"/>
    <property type="evidence" value="ECO:0007669"/>
    <property type="project" value="UniProtKB-KW"/>
</dbReference>
<dbReference type="GO" id="GO:0006021">
    <property type="term" value="P:inositol biosynthetic process"/>
    <property type="evidence" value="ECO:0007669"/>
    <property type="project" value="UniProtKB-UniPathway"/>
</dbReference>
<dbReference type="GO" id="GO:0046854">
    <property type="term" value="P:phosphatidylinositol phosphate biosynthetic process"/>
    <property type="evidence" value="ECO:0007669"/>
    <property type="project" value="InterPro"/>
</dbReference>
<dbReference type="CDD" id="cd01639">
    <property type="entry name" value="IMPase"/>
    <property type="match status" value="1"/>
</dbReference>
<dbReference type="FunFam" id="3.30.540.10:FF:000003">
    <property type="entry name" value="Inositol-1-monophosphatase"/>
    <property type="match status" value="1"/>
</dbReference>
<dbReference type="FunFam" id="3.40.190.80:FF:000002">
    <property type="entry name" value="Inositol-1-monophosphatase"/>
    <property type="match status" value="1"/>
</dbReference>
<dbReference type="Gene3D" id="3.40.190.80">
    <property type="match status" value="1"/>
</dbReference>
<dbReference type="Gene3D" id="3.30.540.10">
    <property type="entry name" value="Fructose-1,6-Bisphosphatase, subunit A, domain 1"/>
    <property type="match status" value="1"/>
</dbReference>
<dbReference type="InterPro" id="IPR033942">
    <property type="entry name" value="IMPase"/>
</dbReference>
<dbReference type="InterPro" id="IPR020583">
    <property type="entry name" value="Inositol_monoP_metal-BS"/>
</dbReference>
<dbReference type="InterPro" id="IPR000760">
    <property type="entry name" value="Inositol_monophosphatase-like"/>
</dbReference>
<dbReference type="InterPro" id="IPR020550">
    <property type="entry name" value="Inositol_monophosphatase_CS"/>
</dbReference>
<dbReference type="PANTHER" id="PTHR20854">
    <property type="entry name" value="INOSITOL MONOPHOSPHATASE"/>
    <property type="match status" value="1"/>
</dbReference>
<dbReference type="PANTHER" id="PTHR20854:SF17">
    <property type="entry name" value="PHOSPHATASE IMPL1, CHLOROPLASTIC"/>
    <property type="match status" value="1"/>
</dbReference>
<dbReference type="Pfam" id="PF00459">
    <property type="entry name" value="Inositol_P"/>
    <property type="match status" value="1"/>
</dbReference>
<dbReference type="PRINTS" id="PR00377">
    <property type="entry name" value="IMPHPHTASES"/>
</dbReference>
<dbReference type="SUPFAM" id="SSF56655">
    <property type="entry name" value="Carbohydrate phosphatase"/>
    <property type="match status" value="1"/>
</dbReference>
<dbReference type="PROSITE" id="PS00629">
    <property type="entry name" value="IMP_1"/>
    <property type="match status" value="1"/>
</dbReference>
<dbReference type="PROSITE" id="PS00630">
    <property type="entry name" value="IMP_2"/>
    <property type="match status" value="1"/>
</dbReference>
<evidence type="ECO:0000250" key="1"/>
<evidence type="ECO:0000269" key="2">
    <source>
    </source>
</evidence>
<evidence type="ECO:0000269" key="3">
    <source>
    </source>
</evidence>
<evidence type="ECO:0000269" key="4">
    <source>
    </source>
</evidence>
<evidence type="ECO:0000305" key="5"/>
<evidence type="ECO:0007744" key="6">
    <source>
    </source>
</evidence>
<protein>
    <recommendedName>
        <fullName>Phosphatase IMPL1, chloroplastic</fullName>
        <ecNumber>3.1.3.25</ecNumber>
    </recommendedName>
    <alternativeName>
        <fullName>Protein MYO-INOSITOL MONOPHOSPHATASE-LIKE 1</fullName>
    </alternativeName>
</protein>
<accession>Q94F00</accession>
<accession>Q8LF86</accession>
<accession>Q9SA15</accession>
<sequence length="371" mass="40445">MGRSLIFSGNMSLRISHLPRSSLPLQNPISGRTVNRTFRYRCTRILSNSFKSTTRLQTKAVLSEVSDQTRYPRIGAKTTGTISPAHLLEVVELAAKTGAEVVMEAVNKPRNITYKGLSDLVTDTDKASEAAILEVVKKNFSDHLILGEEGGIIGDSSSDYLWCIDPLDGTTNFAHGYPSFAVSVGVLYRGNPAAASVVEFVGGPMCWNTRTFSATAGGGALCNGQKIHVSKTDAVERALLITGFGYEHDDAWSTNMELFKEFTDVSRGVRRLGAAAVDMCHVALGIAESYWEYRLKPWDMAAGVLIVEEAGGAVTRMDGGKFSVFDRSVLVSNGVLHPKLLERIAPATENLKSKGIDFSLWFKPEDYHTEL</sequence>
<keyword id="KW-0007">Acetylation</keyword>
<keyword id="KW-0150">Chloroplast</keyword>
<keyword id="KW-0378">Hydrolase</keyword>
<keyword id="KW-0460">Magnesium</keyword>
<keyword id="KW-0479">Metal-binding</keyword>
<keyword id="KW-0934">Plastid</keyword>
<keyword id="KW-1185">Reference proteome</keyword>
<keyword id="KW-0809">Transit peptide</keyword>
<proteinExistence type="evidence at protein level"/>
<gene>
    <name type="primary">IMPL1</name>
    <name type="ordered locus">At1g31190</name>
    <name type="ORF">F28K20.15</name>
</gene>
<reference key="1">
    <citation type="journal article" date="2000" name="Nature">
        <title>Sequence and analysis of chromosome 1 of the plant Arabidopsis thaliana.</title>
        <authorList>
            <person name="Theologis A."/>
            <person name="Ecker J.R."/>
            <person name="Palm C.J."/>
            <person name="Federspiel N.A."/>
            <person name="Kaul S."/>
            <person name="White O."/>
            <person name="Alonso J."/>
            <person name="Altafi H."/>
            <person name="Araujo R."/>
            <person name="Bowman C.L."/>
            <person name="Brooks S.Y."/>
            <person name="Buehler E."/>
            <person name="Chan A."/>
            <person name="Chao Q."/>
            <person name="Chen H."/>
            <person name="Cheuk R.F."/>
            <person name="Chin C.W."/>
            <person name="Chung M.K."/>
            <person name="Conn L."/>
            <person name="Conway A.B."/>
            <person name="Conway A.R."/>
            <person name="Creasy T.H."/>
            <person name="Dewar K."/>
            <person name="Dunn P."/>
            <person name="Etgu P."/>
            <person name="Feldblyum T.V."/>
            <person name="Feng J.-D."/>
            <person name="Fong B."/>
            <person name="Fujii C.Y."/>
            <person name="Gill J.E."/>
            <person name="Goldsmith A.D."/>
            <person name="Haas B."/>
            <person name="Hansen N.F."/>
            <person name="Hughes B."/>
            <person name="Huizar L."/>
            <person name="Hunter J.L."/>
            <person name="Jenkins J."/>
            <person name="Johnson-Hopson C."/>
            <person name="Khan S."/>
            <person name="Khaykin E."/>
            <person name="Kim C.J."/>
            <person name="Koo H.L."/>
            <person name="Kremenetskaia I."/>
            <person name="Kurtz D.B."/>
            <person name="Kwan A."/>
            <person name="Lam B."/>
            <person name="Langin-Hooper S."/>
            <person name="Lee A."/>
            <person name="Lee J.M."/>
            <person name="Lenz C.A."/>
            <person name="Li J.H."/>
            <person name="Li Y.-P."/>
            <person name="Lin X."/>
            <person name="Liu S.X."/>
            <person name="Liu Z.A."/>
            <person name="Luros J.S."/>
            <person name="Maiti R."/>
            <person name="Marziali A."/>
            <person name="Militscher J."/>
            <person name="Miranda M."/>
            <person name="Nguyen M."/>
            <person name="Nierman W.C."/>
            <person name="Osborne B.I."/>
            <person name="Pai G."/>
            <person name="Peterson J."/>
            <person name="Pham P.K."/>
            <person name="Rizzo M."/>
            <person name="Rooney T."/>
            <person name="Rowley D."/>
            <person name="Sakano H."/>
            <person name="Salzberg S.L."/>
            <person name="Schwartz J.R."/>
            <person name="Shinn P."/>
            <person name="Southwick A.M."/>
            <person name="Sun H."/>
            <person name="Tallon L.J."/>
            <person name="Tambunga G."/>
            <person name="Toriumi M.J."/>
            <person name="Town C.D."/>
            <person name="Utterback T."/>
            <person name="Van Aken S."/>
            <person name="Vaysberg M."/>
            <person name="Vysotskaia V.S."/>
            <person name="Walker M."/>
            <person name="Wu D."/>
            <person name="Yu G."/>
            <person name="Fraser C.M."/>
            <person name="Venter J.C."/>
            <person name="Davis R.W."/>
        </authorList>
    </citation>
    <scope>NUCLEOTIDE SEQUENCE [LARGE SCALE GENOMIC DNA]</scope>
    <source>
        <strain>cv. Columbia</strain>
    </source>
</reference>
<reference key="2">
    <citation type="journal article" date="2017" name="Plant J.">
        <title>Araport11: a complete reannotation of the Arabidopsis thaliana reference genome.</title>
        <authorList>
            <person name="Cheng C.Y."/>
            <person name="Krishnakumar V."/>
            <person name="Chan A.P."/>
            <person name="Thibaud-Nissen F."/>
            <person name="Schobel S."/>
            <person name="Town C.D."/>
        </authorList>
    </citation>
    <scope>GENOME REANNOTATION</scope>
    <source>
        <strain>cv. Columbia</strain>
    </source>
</reference>
<reference key="3">
    <citation type="submission" date="2002-03" db="EMBL/GenBank/DDBJ databases">
        <title>Full-length cDNA from Arabidopsis thaliana.</title>
        <authorList>
            <person name="Brover V.V."/>
            <person name="Troukhan M.E."/>
            <person name="Alexandrov N.A."/>
            <person name="Lu Y.-P."/>
            <person name="Flavell R.B."/>
            <person name="Feldmann K.A."/>
        </authorList>
    </citation>
    <scope>NUCLEOTIDE SEQUENCE [LARGE SCALE MRNA]</scope>
</reference>
<reference key="4">
    <citation type="journal article" date="2003" name="Science">
        <title>Empirical analysis of transcriptional activity in the Arabidopsis genome.</title>
        <authorList>
            <person name="Yamada K."/>
            <person name="Lim J."/>
            <person name="Dale J.M."/>
            <person name="Chen H."/>
            <person name="Shinn P."/>
            <person name="Palm C.J."/>
            <person name="Southwick A.M."/>
            <person name="Wu H.C."/>
            <person name="Kim C.J."/>
            <person name="Nguyen M."/>
            <person name="Pham P.K."/>
            <person name="Cheuk R.F."/>
            <person name="Karlin-Newmann G."/>
            <person name="Liu S.X."/>
            <person name="Lam B."/>
            <person name="Sakano H."/>
            <person name="Wu T."/>
            <person name="Yu G."/>
            <person name="Miranda M."/>
            <person name="Quach H.L."/>
            <person name="Tripp M."/>
            <person name="Chang C.H."/>
            <person name="Lee J.M."/>
            <person name="Toriumi M.J."/>
            <person name="Chan M.M."/>
            <person name="Tang C.C."/>
            <person name="Onodera C.S."/>
            <person name="Deng J.M."/>
            <person name="Akiyama K."/>
            <person name="Ansari Y."/>
            <person name="Arakawa T."/>
            <person name="Banh J."/>
            <person name="Banno F."/>
            <person name="Bowser L."/>
            <person name="Brooks S.Y."/>
            <person name="Carninci P."/>
            <person name="Chao Q."/>
            <person name="Choy N."/>
            <person name="Enju A."/>
            <person name="Goldsmith A.D."/>
            <person name="Gurjal M."/>
            <person name="Hansen N.F."/>
            <person name="Hayashizaki Y."/>
            <person name="Johnson-Hopson C."/>
            <person name="Hsuan V.W."/>
            <person name="Iida K."/>
            <person name="Karnes M."/>
            <person name="Khan S."/>
            <person name="Koesema E."/>
            <person name="Ishida J."/>
            <person name="Jiang P.X."/>
            <person name="Jones T."/>
            <person name="Kawai J."/>
            <person name="Kamiya A."/>
            <person name="Meyers C."/>
            <person name="Nakajima M."/>
            <person name="Narusaka M."/>
            <person name="Seki M."/>
            <person name="Sakurai T."/>
            <person name="Satou M."/>
            <person name="Tamse R."/>
            <person name="Vaysberg M."/>
            <person name="Wallender E.K."/>
            <person name="Wong C."/>
            <person name="Yamamura Y."/>
            <person name="Yuan S."/>
            <person name="Shinozaki K."/>
            <person name="Davis R.W."/>
            <person name="Theologis A."/>
            <person name="Ecker J.R."/>
        </authorList>
    </citation>
    <scope>NUCLEOTIDE SEQUENCE [LARGE SCALE MRNA]</scope>
    <source>
        <strain>cv. Columbia</strain>
    </source>
</reference>
<reference key="5">
    <citation type="journal article" date="2008" name="PLoS ONE">
        <title>Sorting signals, N-terminal modifications and abundance of the chloroplast proteome.</title>
        <authorList>
            <person name="Zybailov B."/>
            <person name="Rutschow H."/>
            <person name="Friso G."/>
            <person name="Rudella A."/>
            <person name="Emanuelsson O."/>
            <person name="Sun Q."/>
            <person name="van Wijk K.J."/>
        </authorList>
    </citation>
    <scope>IDENTIFICATION BY MASS SPECTROMETRY</scope>
    <scope>SUBCELLULAR LOCATION [LARGE SCALE ANALYSIS]</scope>
</reference>
<reference key="6">
    <citation type="journal article" date="2009" name="Plant Physiol.">
        <title>VTC4 is a bifunctional enzyme that affects myoinositol and ascorbate biosynthesis in plants.</title>
        <authorList>
            <person name="Torabinejad J."/>
            <person name="Donahue J.L."/>
            <person name="Gunesekera B.N."/>
            <person name="Allen-Daniels M.J."/>
            <person name="Gillaspy G.E."/>
        </authorList>
    </citation>
    <scope>FUNCTION</scope>
    <scope>CATALYTIC ACTIVITY</scope>
</reference>
<reference key="7">
    <citation type="journal article" date="2011" name="J. Plant Res.">
        <title>Expression and functions of myo-inositol monophosphatase family genes in seed development of Arabidopsis.</title>
        <authorList>
            <person name="Sato Y."/>
            <person name="Yazawa K."/>
            <person name="Yoshida S."/>
            <person name="Tamaoki M."/>
            <person name="Nakajima N."/>
            <person name="Iwai H."/>
            <person name="Ishii T."/>
            <person name="Satoh S."/>
        </authorList>
    </citation>
    <scope>FUNCTION</scope>
    <scope>DEVELOPMENTAL STAGE</scope>
    <scope>TISSUE SPECIFICITY</scope>
</reference>
<reference key="8">
    <citation type="journal article" date="2012" name="Mol. Cell. Proteomics">
        <title>Comparative large-scale characterisation of plant vs. mammal proteins reveals similar and idiosyncratic N-alpha acetylation features.</title>
        <authorList>
            <person name="Bienvenut W.V."/>
            <person name="Sumpton D."/>
            <person name="Martinez A."/>
            <person name="Lilla S."/>
            <person name="Espagne C."/>
            <person name="Meinnel T."/>
            <person name="Giglione C."/>
        </authorList>
    </citation>
    <scope>ACETYLATION [LARGE SCALE ANALYSIS] AT VAL-61</scope>
    <scope>CLEAVAGE OF TRANSIT PEPTIDE [LARGE SCALE ANALYSIS] AFTER ALA-60</scope>
    <scope>IDENTIFICATION BY MASS SPECTROMETRY [LARGE SCALE ANALYSIS]</scope>
</reference>
<feature type="transit peptide" description="Chloroplast" evidence="6">
    <location>
        <begin position="1"/>
        <end position="60"/>
    </location>
</feature>
<feature type="chain" id="PRO_0000383677" description="Phosphatase IMPL1, chloroplastic">
    <location>
        <begin position="61"/>
        <end position="371"/>
    </location>
</feature>
<feature type="binding site" evidence="1">
    <location>
        <position position="148"/>
    </location>
    <ligand>
        <name>Mg(2+)</name>
        <dbReference type="ChEBI" id="CHEBI:18420"/>
        <label>1</label>
    </ligand>
</feature>
<feature type="binding site" evidence="1">
    <location>
        <position position="148"/>
    </location>
    <ligand>
        <name>substrate</name>
    </ligand>
</feature>
<feature type="binding site" evidence="1">
    <location>
        <position position="165"/>
    </location>
    <ligand>
        <name>Mg(2+)</name>
        <dbReference type="ChEBI" id="CHEBI:18420"/>
        <label>1</label>
    </ligand>
</feature>
<feature type="binding site" evidence="1">
    <location>
        <position position="165"/>
    </location>
    <ligand>
        <name>Mg(2+)</name>
        <dbReference type="ChEBI" id="CHEBI:18420"/>
        <label>2</label>
    </ligand>
</feature>
<feature type="binding site" evidence="1">
    <location>
        <begin position="167"/>
        <end position="170"/>
    </location>
    <ligand>
        <name>substrate</name>
    </ligand>
</feature>
<feature type="binding site" evidence="1">
    <location>
        <position position="167"/>
    </location>
    <ligand>
        <name>Mg(2+)</name>
        <dbReference type="ChEBI" id="CHEBI:18420"/>
        <label>1</label>
    </ligand>
</feature>
<feature type="binding site" evidence="1">
    <location>
        <position position="168"/>
    </location>
    <ligand>
        <name>Mg(2+)</name>
        <dbReference type="ChEBI" id="CHEBI:18420"/>
        <label>2</label>
    </ligand>
</feature>
<feature type="binding site" evidence="1">
    <location>
        <begin position="273"/>
        <end position="275"/>
    </location>
    <ligand>
        <name>substrate</name>
    </ligand>
</feature>
<feature type="binding site" evidence="1">
    <location>
        <position position="292"/>
    </location>
    <ligand>
        <name>substrate</name>
    </ligand>
</feature>
<feature type="binding site" evidence="1">
    <location>
        <position position="299"/>
    </location>
    <ligand>
        <name>Mg(2+)</name>
        <dbReference type="ChEBI" id="CHEBI:18420"/>
        <label>2</label>
    </ligand>
</feature>
<feature type="binding site" evidence="1">
    <location>
        <position position="299"/>
    </location>
    <ligand>
        <name>substrate</name>
    </ligand>
</feature>
<feature type="modified residue" description="N-acetylvaline" evidence="6">
    <location>
        <position position="61"/>
    </location>
</feature>
<feature type="sequence conflict" description="In Ref. 4; AAK62447/AAP37817." evidence="5" ref="4">
    <original>R</original>
    <variation>G</variation>
    <location>
        <position position="20"/>
    </location>
</feature>
<feature type="sequence conflict" description="In Ref. 3; AAM61548." evidence="5" ref="3">
    <original>I</original>
    <variation>F</variation>
    <location>
        <position position="29"/>
    </location>
</feature>
<feature type="sequence conflict" description="In Ref. 3; AAM61548." evidence="5" ref="3">
    <original>W</original>
    <variation>R</variation>
    <location>
        <position position="207"/>
    </location>
</feature>
<comment type="function">
    <text evidence="3 4">Phosphatase acting preferentially on D-myoinositol 1-phosphate (D-Ins 1-P).</text>
</comment>
<comment type="catalytic activity">
    <reaction evidence="3">
        <text>a myo-inositol phosphate + H2O = myo-inositol + phosphate</text>
        <dbReference type="Rhea" id="RHEA:24056"/>
        <dbReference type="ChEBI" id="CHEBI:15377"/>
        <dbReference type="ChEBI" id="CHEBI:17268"/>
        <dbReference type="ChEBI" id="CHEBI:43474"/>
        <dbReference type="ChEBI" id="CHEBI:84139"/>
        <dbReference type="EC" id="3.1.3.25"/>
    </reaction>
</comment>
<comment type="cofactor">
    <cofactor evidence="1">
        <name>Mg(2+)</name>
        <dbReference type="ChEBI" id="CHEBI:18420"/>
    </cofactor>
</comment>
<comment type="pathway">
    <text>Polyol metabolism; myo-inositol biosynthesis; myo-inositol from D-glucose 6-phosphate: step 2/2.</text>
</comment>
<comment type="subcellular location">
    <subcellularLocation>
        <location evidence="2">Plastid</location>
        <location evidence="2">Chloroplast stroma</location>
    </subcellularLocation>
</comment>
<comment type="tissue specificity">
    <text evidence="4">Ubiquitous. Expressed in pistil and seed endosperm.</text>
</comment>
<comment type="developmental stage">
    <text evidence="4">Detected in globular to heart stage embryos.</text>
</comment>
<comment type="similarity">
    <text evidence="5">Belongs to the inositol monophosphatase superfamily.</text>
</comment>
<comment type="sequence caution" evidence="5">
    <conflict type="erroneous gene model prediction">
        <sequence resource="EMBL-CDS" id="AAD21685"/>
    </conflict>
</comment>
<name>IMPL1_ARATH</name>
<organism>
    <name type="scientific">Arabidopsis thaliana</name>
    <name type="common">Mouse-ear cress</name>
    <dbReference type="NCBI Taxonomy" id="3702"/>
    <lineage>
        <taxon>Eukaryota</taxon>
        <taxon>Viridiplantae</taxon>
        <taxon>Streptophyta</taxon>
        <taxon>Embryophyta</taxon>
        <taxon>Tracheophyta</taxon>
        <taxon>Spermatophyta</taxon>
        <taxon>Magnoliopsida</taxon>
        <taxon>eudicotyledons</taxon>
        <taxon>Gunneridae</taxon>
        <taxon>Pentapetalae</taxon>
        <taxon>rosids</taxon>
        <taxon>malvids</taxon>
        <taxon>Brassicales</taxon>
        <taxon>Brassicaceae</taxon>
        <taxon>Camelineae</taxon>
        <taxon>Arabidopsis</taxon>
    </lineage>
</organism>